<comment type="function">
    <text evidence="7 8 9 10 11 12 14 15 16">Factor involved in transcription-coupled nucleotide excision repair (TC-NER), a mechanism that rapidly removes RNA polymerase II-blocking lesions from the transcribed strand of active genes (PubMed:22466610, PubMed:22466611, PubMed:22466612, PubMed:32142649, PubMed:32355176, PubMed:34526721, PubMed:38316879, PubMed:38600235, PubMed:38600236). Acts as a key adapter that promotes recruitment of factors involved in TC-NER (PubMed:22466611, PubMed:22466612, PubMed:32142649, PubMed:32355176, PubMed:34526721, PubMed:38600235, PubMed:38600236). Facilitates the ubiquitination of the elongating form of RNA polymerase II (RNA pol IIo) at DNA damage sites, thereby promoting RNA pol IIo backtracking and access by the TC-NER machinery to lesion sites (PubMed:22466611, PubMed:32142649). Also promotes stabilization of ERCC6/CSB by recruiting deubiquitinating enzyme USP7 to TC-NER complexes, preventing UV-induced degradation of ERCC6 by the proteasome (PubMed:22466611, PubMed:22466612). Mediates the recruitment of the TFIIH complex and other factors that are required for nucleotide excision repair to RNA polymerase II (PubMed:32142649, PubMed:32355176, PubMed:34526721, PubMed:38600235, PubMed:38600236). Also required to inactivate stalled RNA polymerase II by blocking the access of TCEA1/TFIIS, thereby preventing reactivation of RNA polymerase II (PubMed:38316879). Not involved in processing oxidative damage (PubMed:22466612).</text>
</comment>
<comment type="subunit">
    <text evidence="8 9 10">Interacts with the elongating form of RNA polymerase II (RNA pol IIo) during transcription stress (PubMed:22466611, PubMed:32142649). Interacts with the TFIIH complex during transcription stress (PubMed:32142649). Interacts with ERCC6 (PubMed:22466612). Interacts with ERCC8 (PubMed:22466612). Interacts with USP7 (PubMed:22466611, PubMed:22466612).</text>
</comment>
<comment type="interaction">
    <interactant intactId="EBI-11153331">
        <id>Q2YD98</id>
    </interactant>
    <interactant intactId="EBI-358297">
        <id>O00505</id>
        <label>KPNA3</label>
    </interactant>
    <organismsDiffer>false</organismsDiffer>
    <experiments>3</experiments>
</comment>
<comment type="interaction">
    <interactant intactId="EBI-11153331">
        <id>Q2YD98</id>
    </interactant>
    <interactant intactId="EBI-743122">
        <id>P43358</id>
        <label>MAGEA4</label>
    </interactant>
    <organismsDiffer>false</organismsDiffer>
    <experiments>3</experiments>
</comment>
<comment type="subcellular location">
    <subcellularLocation>
        <location evidence="8 9">Chromosome</location>
    </subcellularLocation>
    <text evidence="8">Accumulates at UV DNA damage sites.</text>
</comment>
<comment type="alternative products">
    <event type="alternative splicing"/>
    <isoform>
        <id>Q2YD98-1</id>
        <name>1</name>
        <sequence type="displayed"/>
    </isoform>
    <isoform>
        <id>Q2YD98-2</id>
        <name>2</name>
        <sequence type="described" ref="VSP_030932"/>
    </isoform>
</comment>
<comment type="PTM">
    <text evidence="8 10">Monoubiquitinated at Lys-414 in response to transcription stress; this promotes efficient transfer of TFIIH to stalled RNA polymerase II.</text>
</comment>
<comment type="disease" evidence="7 8 9 13">
    <disease id="DI-03444">
        <name>UV-sensitive syndrome 3</name>
        <acronym>UVSS3</acronym>
        <description>An autosomal recessive disorder characterized by cutaneous photosensitivity and slight dyspigmentation, without an increased risk of skin tumors.</description>
        <dbReference type="MIM" id="614640"/>
    </disease>
    <text>The disease is caused by variants affecting the gene represented in this entry.</text>
</comment>
<comment type="similarity">
    <text evidence="21">Belongs to the UVSSA family.</text>
</comment>
<comment type="sequence caution" evidence="21">
    <conflict type="erroneous initiation">
        <sequence resource="EMBL-CDS" id="BAA96054"/>
    </conflict>
    <text>Extended N-terminus.</text>
</comment>
<organism>
    <name type="scientific">Homo sapiens</name>
    <name type="common">Human</name>
    <dbReference type="NCBI Taxonomy" id="9606"/>
    <lineage>
        <taxon>Eukaryota</taxon>
        <taxon>Metazoa</taxon>
        <taxon>Chordata</taxon>
        <taxon>Craniata</taxon>
        <taxon>Vertebrata</taxon>
        <taxon>Euteleostomi</taxon>
        <taxon>Mammalia</taxon>
        <taxon>Eutheria</taxon>
        <taxon>Euarchontoglires</taxon>
        <taxon>Primates</taxon>
        <taxon>Haplorrhini</taxon>
        <taxon>Catarrhini</taxon>
        <taxon>Hominidae</taxon>
        <taxon>Homo</taxon>
    </lineage>
</organism>
<dbReference type="EMBL" id="AB040963">
    <property type="protein sequence ID" value="BAA96054.1"/>
    <property type="status" value="ALT_INIT"/>
    <property type="molecule type" value="mRNA"/>
</dbReference>
<dbReference type="EMBL" id="AK292661">
    <property type="protein sequence ID" value="BAF85350.1"/>
    <property type="molecule type" value="mRNA"/>
</dbReference>
<dbReference type="EMBL" id="AC078852">
    <property type="status" value="NOT_ANNOTATED_CDS"/>
    <property type="molecule type" value="Genomic_DNA"/>
</dbReference>
<dbReference type="EMBL" id="AC118281">
    <property type="status" value="NOT_ANNOTATED_CDS"/>
    <property type="molecule type" value="Genomic_DNA"/>
</dbReference>
<dbReference type="EMBL" id="BC021930">
    <property type="protein sequence ID" value="AAH21930.1"/>
    <property type="molecule type" value="mRNA"/>
</dbReference>
<dbReference type="EMBL" id="BC110331">
    <property type="protein sequence ID" value="AAI10332.1"/>
    <property type="molecule type" value="mRNA"/>
</dbReference>
<dbReference type="EMBL" id="BC140901">
    <property type="protein sequence ID" value="AAI40902.1"/>
    <property type="molecule type" value="mRNA"/>
</dbReference>
<dbReference type="CCDS" id="CCDS33938.1">
    <molecule id="Q2YD98-1"/>
</dbReference>
<dbReference type="RefSeq" id="NP_001304863.1">
    <molecule id="Q2YD98-1"/>
    <property type="nucleotide sequence ID" value="NM_001317934.2"/>
</dbReference>
<dbReference type="RefSeq" id="NP_001304864.1">
    <molecule id="Q2YD98-1"/>
    <property type="nucleotide sequence ID" value="NM_001317935.2"/>
</dbReference>
<dbReference type="RefSeq" id="NP_065945.2">
    <molecule id="Q2YD98-1"/>
    <property type="nucleotide sequence ID" value="NM_020894.4"/>
</dbReference>
<dbReference type="RefSeq" id="XP_016863979.1">
    <molecule id="Q2YD98-1"/>
    <property type="nucleotide sequence ID" value="XM_017008490.1"/>
</dbReference>
<dbReference type="RefSeq" id="XP_016863980.1">
    <property type="nucleotide sequence ID" value="XM_017008491.1"/>
</dbReference>
<dbReference type="RefSeq" id="XP_016863981.1">
    <molecule id="Q2YD98-1"/>
    <property type="nucleotide sequence ID" value="XM_017008492.3"/>
</dbReference>
<dbReference type="RefSeq" id="XP_016863982.1">
    <molecule id="Q2YD98-1"/>
    <property type="nucleotide sequence ID" value="XM_017008493.3"/>
</dbReference>
<dbReference type="RefSeq" id="XP_016863983.1">
    <molecule id="Q2YD98-1"/>
    <property type="nucleotide sequence ID" value="XM_017008494.3"/>
</dbReference>
<dbReference type="RefSeq" id="XP_024309930.1">
    <molecule id="Q2YD98-2"/>
    <property type="nucleotide sequence ID" value="XM_024454162.2"/>
</dbReference>
<dbReference type="RefSeq" id="XP_054206593.1">
    <molecule id="Q2YD98-1"/>
    <property type="nucleotide sequence ID" value="XM_054350618.1"/>
</dbReference>
<dbReference type="RefSeq" id="XP_054206594.1">
    <molecule id="Q2YD98-1"/>
    <property type="nucleotide sequence ID" value="XM_054350619.1"/>
</dbReference>
<dbReference type="RefSeq" id="XP_054206595.1">
    <molecule id="Q2YD98-1"/>
    <property type="nucleotide sequence ID" value="XM_054350620.1"/>
</dbReference>
<dbReference type="RefSeq" id="XP_054206596.1">
    <molecule id="Q2YD98-1"/>
    <property type="nucleotide sequence ID" value="XM_054350621.1"/>
</dbReference>
<dbReference type="RefSeq" id="XP_054206605.1">
    <molecule id="Q2YD98-2"/>
    <property type="nucleotide sequence ID" value="XM_054350630.1"/>
</dbReference>
<dbReference type="PDB" id="5XV8">
    <property type="method" value="NMR"/>
    <property type="chains" value="A=390-434"/>
</dbReference>
<dbReference type="PDB" id="7OO3">
    <property type="method" value="EM"/>
    <property type="resolution" value="2.80 A"/>
    <property type="chains" value="c=1-709"/>
</dbReference>
<dbReference type="PDB" id="7OOP">
    <property type="method" value="EM"/>
    <property type="resolution" value="2.90 A"/>
    <property type="chains" value="c=1-709"/>
</dbReference>
<dbReference type="PDB" id="7OPC">
    <property type="method" value="EM"/>
    <property type="resolution" value="3.00 A"/>
    <property type="chains" value="c=1-709"/>
</dbReference>
<dbReference type="PDB" id="7OPD">
    <property type="method" value="EM"/>
    <property type="resolution" value="3.00 A"/>
    <property type="chains" value="c=1-709"/>
</dbReference>
<dbReference type="PDB" id="8B3D">
    <property type="method" value="EM"/>
    <property type="resolution" value="2.60 A"/>
    <property type="chains" value="c=1-709"/>
</dbReference>
<dbReference type="PDB" id="8B3G">
    <property type="method" value="EM"/>
    <property type="resolution" value="4.40 A"/>
    <property type="chains" value="c=1-709"/>
</dbReference>
<dbReference type="PDB" id="8QH5">
    <property type="method" value="EM"/>
    <property type="resolution" value="3.40 A"/>
    <property type="chains" value="D=1-709"/>
</dbReference>
<dbReference type="PDB" id="9BZ0">
    <property type="method" value="EM"/>
    <property type="resolution" value="1.90 A"/>
    <property type="chains" value="c=1-709"/>
</dbReference>
<dbReference type="PDB" id="9ER2">
    <property type="method" value="EM"/>
    <property type="resolution" value="3.30 A"/>
    <property type="chains" value="M/c=1-709"/>
</dbReference>
<dbReference type="PDB" id="9FD2">
    <property type="method" value="EM"/>
    <property type="resolution" value="3.40 A"/>
    <property type="chains" value="d=1-709"/>
</dbReference>
<dbReference type="PDBsum" id="5XV8"/>
<dbReference type="PDBsum" id="7OO3"/>
<dbReference type="PDBsum" id="7OOP"/>
<dbReference type="PDBsum" id="7OPC"/>
<dbReference type="PDBsum" id="7OPD"/>
<dbReference type="PDBsum" id="8B3D"/>
<dbReference type="PDBsum" id="8B3G"/>
<dbReference type="PDBsum" id="8QH5"/>
<dbReference type="PDBsum" id="9BZ0"/>
<dbReference type="PDBsum" id="9ER2"/>
<dbReference type="PDBsum" id="9FD2"/>
<dbReference type="EMDB" id="EMD-13004"/>
<dbReference type="EMDB" id="EMD-13010"/>
<dbReference type="EMDB" id="EMD-13015"/>
<dbReference type="EMDB" id="EMD-13016"/>
<dbReference type="EMDB" id="EMD-15825"/>
<dbReference type="EMDB" id="EMD-15827"/>
<dbReference type="EMDB" id="EMD-18380"/>
<dbReference type="EMDB" id="EMD-18398"/>
<dbReference type="EMDB" id="EMD-18413"/>
<dbReference type="EMDB" id="EMD-19909"/>
<dbReference type="EMDB" id="EMD-45050"/>
<dbReference type="EMDB" id="EMD-50292"/>
<dbReference type="EMDB" id="EMD-50293"/>
<dbReference type="EMDB" id="EMD-50294"/>
<dbReference type="EMDB" id="EMD-50325"/>
<dbReference type="SMR" id="Q2YD98"/>
<dbReference type="BioGRID" id="121689">
    <property type="interactions" value="39"/>
</dbReference>
<dbReference type="FunCoup" id="Q2YD98">
    <property type="interactions" value="2005"/>
</dbReference>
<dbReference type="IntAct" id="Q2YD98">
    <property type="interactions" value="5"/>
</dbReference>
<dbReference type="MINT" id="Q2YD98"/>
<dbReference type="STRING" id="9606.ENSP00000425130"/>
<dbReference type="iPTMnet" id="Q2YD98"/>
<dbReference type="PhosphoSitePlus" id="Q2YD98"/>
<dbReference type="BioMuta" id="UVSSA"/>
<dbReference type="DMDM" id="296434546"/>
<dbReference type="jPOST" id="Q2YD98"/>
<dbReference type="MassIVE" id="Q2YD98"/>
<dbReference type="PaxDb" id="9606-ENSP00000374501"/>
<dbReference type="PeptideAtlas" id="Q2YD98"/>
<dbReference type="ProteomicsDB" id="61547">
    <molecule id="Q2YD98-1"/>
</dbReference>
<dbReference type="ProteomicsDB" id="61548">
    <molecule id="Q2YD98-2"/>
</dbReference>
<dbReference type="Pumba" id="Q2YD98"/>
<dbReference type="Antibodypedia" id="22237">
    <property type="antibodies" value="43 antibodies from 17 providers"/>
</dbReference>
<dbReference type="DNASU" id="57654"/>
<dbReference type="Ensembl" id="ENST00000389851.10">
    <molecule id="Q2YD98-1"/>
    <property type="protein sequence ID" value="ENSP00000374501.4"/>
    <property type="gene ID" value="ENSG00000163945.19"/>
</dbReference>
<dbReference type="Ensembl" id="ENST00000507531.5">
    <molecule id="Q2YD98-1"/>
    <property type="protein sequence ID" value="ENSP00000421741.1"/>
    <property type="gene ID" value="ENSG00000163945.19"/>
</dbReference>
<dbReference type="Ensembl" id="ENST00000511216.6">
    <molecule id="Q2YD98-1"/>
    <property type="protein sequence ID" value="ENSP00000425130.1"/>
    <property type="gene ID" value="ENSG00000163945.19"/>
</dbReference>
<dbReference type="Ensembl" id="ENST00000512728.5">
    <molecule id="Q2YD98-2"/>
    <property type="protein sequence ID" value="ENSP00000427701.1"/>
    <property type="gene ID" value="ENSG00000163945.19"/>
</dbReference>
<dbReference type="Ensembl" id="ENST00000677286.1">
    <molecule id="Q2YD98-1"/>
    <property type="protein sequence ID" value="ENSP00000503948.1"/>
    <property type="gene ID" value="ENSG00000163945.19"/>
</dbReference>
<dbReference type="Ensembl" id="ENST00000679192.1">
    <molecule id="Q2YD98-1"/>
    <property type="protein sequence ID" value="ENSP00000504544.1"/>
    <property type="gene ID" value="ENSG00000163945.19"/>
</dbReference>
<dbReference type="GeneID" id="57654"/>
<dbReference type="KEGG" id="hsa:57654"/>
<dbReference type="MANE-Select" id="ENST00000389851.10">
    <property type="protein sequence ID" value="ENSP00000374501.4"/>
    <property type="RefSeq nucleotide sequence ID" value="NM_020894.4"/>
    <property type="RefSeq protein sequence ID" value="NP_065945.2"/>
</dbReference>
<dbReference type="UCSC" id="uc003gde.5">
    <molecule id="Q2YD98-1"/>
    <property type="organism name" value="human"/>
</dbReference>
<dbReference type="AGR" id="HGNC:29304"/>
<dbReference type="CTD" id="57654"/>
<dbReference type="DisGeNET" id="57654"/>
<dbReference type="GeneCards" id="UVSSA"/>
<dbReference type="HGNC" id="HGNC:29304">
    <property type="gene designation" value="UVSSA"/>
</dbReference>
<dbReference type="HPA" id="ENSG00000163945">
    <property type="expression patterns" value="Low tissue specificity"/>
</dbReference>
<dbReference type="MalaCards" id="UVSSA"/>
<dbReference type="MIM" id="614632">
    <property type="type" value="gene"/>
</dbReference>
<dbReference type="MIM" id="614640">
    <property type="type" value="phenotype"/>
</dbReference>
<dbReference type="neXtProt" id="NX_Q2YD98"/>
<dbReference type="OpenTargets" id="ENSG00000163945"/>
<dbReference type="Orphanet" id="178338">
    <property type="disease" value="UV-sensitive syndrome"/>
</dbReference>
<dbReference type="PharmGKB" id="PA162393105"/>
<dbReference type="VEuPathDB" id="HostDB:ENSG00000163945"/>
<dbReference type="eggNOG" id="KOG2374">
    <property type="taxonomic scope" value="Eukaryota"/>
</dbReference>
<dbReference type="GeneTree" id="ENSGT00390000000377"/>
<dbReference type="HOGENOM" id="CLU_023577_0_0_1"/>
<dbReference type="InParanoid" id="Q2YD98"/>
<dbReference type="OMA" id="EEHAEMR"/>
<dbReference type="OrthoDB" id="5594015at2759"/>
<dbReference type="PAN-GO" id="Q2YD98">
    <property type="GO annotations" value="4 GO annotations based on evolutionary models"/>
</dbReference>
<dbReference type="PhylomeDB" id="Q2YD98"/>
<dbReference type="TreeFam" id="TF321660"/>
<dbReference type="PathwayCommons" id="Q2YD98"/>
<dbReference type="Reactome" id="R-HSA-6781823">
    <property type="pathway name" value="Formation of TC-NER Pre-Incision Complex"/>
</dbReference>
<dbReference type="Reactome" id="R-HSA-6781827">
    <property type="pathway name" value="Transcription-Coupled Nucleotide Excision Repair (TC-NER)"/>
</dbReference>
<dbReference type="Reactome" id="R-HSA-6782135">
    <property type="pathway name" value="Dual incision in TC-NER"/>
</dbReference>
<dbReference type="Reactome" id="R-HSA-6782210">
    <property type="pathway name" value="Gap-filling DNA repair synthesis and ligation in TC-NER"/>
</dbReference>
<dbReference type="SignaLink" id="Q2YD98"/>
<dbReference type="BioGRID-ORCS" id="57654">
    <property type="hits" value="26 hits in 1153 CRISPR screens"/>
</dbReference>
<dbReference type="CD-CODE" id="1A18FFC4">
    <property type="entry name" value="Paraspeckle"/>
</dbReference>
<dbReference type="ChiTaRS" id="UVSSA">
    <property type="organism name" value="human"/>
</dbReference>
<dbReference type="GeneWiki" id="KIAA1530"/>
<dbReference type="GenomeRNAi" id="57654"/>
<dbReference type="Pharos" id="Q2YD98">
    <property type="development level" value="Tbio"/>
</dbReference>
<dbReference type="PRO" id="PR:Q2YD98"/>
<dbReference type="Proteomes" id="UP000005640">
    <property type="component" value="Chromosome 4"/>
</dbReference>
<dbReference type="RNAct" id="Q2YD98">
    <property type="molecule type" value="protein"/>
</dbReference>
<dbReference type="Bgee" id="ENSG00000163945">
    <property type="expression patterns" value="Expressed in oviduct epithelium and 183 other cell types or tissues"/>
</dbReference>
<dbReference type="ExpressionAtlas" id="Q2YD98">
    <property type="expression patterns" value="baseline and differential"/>
</dbReference>
<dbReference type="GO" id="GO:0005694">
    <property type="term" value="C:chromosome"/>
    <property type="evidence" value="ECO:0000314"/>
    <property type="project" value="UniProtKB"/>
</dbReference>
<dbReference type="GO" id="GO:0005654">
    <property type="term" value="C:nucleoplasm"/>
    <property type="evidence" value="ECO:0000314"/>
    <property type="project" value="HPA"/>
</dbReference>
<dbReference type="GO" id="GO:0005634">
    <property type="term" value="C:nucleus"/>
    <property type="evidence" value="ECO:0000314"/>
    <property type="project" value="UniProtKB"/>
</dbReference>
<dbReference type="GO" id="GO:0090734">
    <property type="term" value="C:site of DNA damage"/>
    <property type="evidence" value="ECO:0000314"/>
    <property type="project" value="UniProtKB"/>
</dbReference>
<dbReference type="GO" id="GO:0140463">
    <property type="term" value="F:chromatin-protein adaptor activity"/>
    <property type="evidence" value="ECO:0000314"/>
    <property type="project" value="UniProtKB"/>
</dbReference>
<dbReference type="GO" id="GO:0000993">
    <property type="term" value="F:RNA polymerase II complex binding"/>
    <property type="evidence" value="ECO:0000314"/>
    <property type="project" value="UniProtKB"/>
</dbReference>
<dbReference type="GO" id="GO:0140870">
    <property type="term" value="F:RNA polymerase inhibitor activity"/>
    <property type="evidence" value="ECO:0000314"/>
    <property type="project" value="UniProtKB"/>
</dbReference>
<dbReference type="GO" id="GO:0016567">
    <property type="term" value="P:protein ubiquitination"/>
    <property type="evidence" value="ECO:0000315"/>
    <property type="project" value="UniProtKB"/>
</dbReference>
<dbReference type="GO" id="GO:0009411">
    <property type="term" value="P:response to UV"/>
    <property type="evidence" value="ECO:0000315"/>
    <property type="project" value="UniProtKB"/>
</dbReference>
<dbReference type="GO" id="GO:0006283">
    <property type="term" value="P:transcription-coupled nucleotide-excision repair"/>
    <property type="evidence" value="ECO:0000314"/>
    <property type="project" value="UniProtKB"/>
</dbReference>
<dbReference type="Gene3D" id="1.25.40.90">
    <property type="match status" value="1"/>
</dbReference>
<dbReference type="InterPro" id="IPR008942">
    <property type="entry name" value="ENTH_VHS"/>
</dbReference>
<dbReference type="InterPro" id="IPR018610">
    <property type="entry name" value="UVSSA"/>
</dbReference>
<dbReference type="InterPro" id="IPR049431">
    <property type="entry name" value="UVSSA_C"/>
</dbReference>
<dbReference type="InterPro" id="IPR049408">
    <property type="entry name" value="UVSSA_N_a-solenoid_rpt"/>
</dbReference>
<dbReference type="PANTHER" id="PTHR28670">
    <property type="entry name" value="UV-STIMULATED SCAFFOLD PROTEIN A"/>
    <property type="match status" value="1"/>
</dbReference>
<dbReference type="PANTHER" id="PTHR28670:SF1">
    <property type="entry name" value="UV-STIMULATED SCAFFOLD PROTEIN A"/>
    <property type="match status" value="1"/>
</dbReference>
<dbReference type="Pfam" id="PF09740">
    <property type="entry name" value="DUF2043"/>
    <property type="match status" value="1"/>
</dbReference>
<dbReference type="Pfam" id="PF20867">
    <property type="entry name" value="UVSSA_N"/>
    <property type="match status" value="1"/>
</dbReference>
<dbReference type="PROSITE" id="PS52058">
    <property type="entry name" value="ZF_UVSSA"/>
    <property type="match status" value="1"/>
</dbReference>
<gene>
    <name evidence="20 24" type="primary">UVSSA</name>
    <name evidence="17" type="synonym">KIAA1530</name>
</gene>
<name>UVSSA_HUMAN</name>
<protein>
    <recommendedName>
        <fullName evidence="21">UV-stimulated scaffold protein A</fullName>
    </recommendedName>
</protein>
<evidence type="ECO:0000255" key="1"/>
<evidence type="ECO:0000255" key="2">
    <source>
        <dbReference type="PROSITE-ProRule" id="PRU01403"/>
    </source>
</evidence>
<evidence type="ECO:0000256" key="3">
    <source>
        <dbReference type="SAM" id="MobiDB-lite"/>
    </source>
</evidence>
<evidence type="ECO:0000269" key="4">
    <source>
    </source>
</evidence>
<evidence type="ECO:0000269" key="5">
    <source>
    </source>
</evidence>
<evidence type="ECO:0000269" key="6">
    <source>
    </source>
</evidence>
<evidence type="ECO:0000269" key="7">
    <source>
    </source>
</evidence>
<evidence type="ECO:0000269" key="8">
    <source>
    </source>
</evidence>
<evidence type="ECO:0000269" key="9">
    <source>
    </source>
</evidence>
<evidence type="ECO:0000269" key="10">
    <source>
    </source>
</evidence>
<evidence type="ECO:0000269" key="11">
    <source>
    </source>
</evidence>
<evidence type="ECO:0000269" key="12">
    <source>
    </source>
</evidence>
<evidence type="ECO:0000269" key="13">
    <source>
    </source>
</evidence>
<evidence type="ECO:0000269" key="14">
    <source>
    </source>
</evidence>
<evidence type="ECO:0000269" key="15">
    <source>
    </source>
</evidence>
<evidence type="ECO:0000269" key="16">
    <source>
    </source>
</evidence>
<evidence type="ECO:0000303" key="17">
    <source>
    </source>
</evidence>
<evidence type="ECO:0000303" key="18">
    <source>
    </source>
</evidence>
<evidence type="ECO:0000303" key="19">
    <source>
    </source>
</evidence>
<evidence type="ECO:0000303" key="20">
    <source>
    </source>
</evidence>
<evidence type="ECO:0000305" key="21"/>
<evidence type="ECO:0000305" key="22">
    <source>
    </source>
</evidence>
<evidence type="ECO:0000305" key="23">
    <source>
    </source>
</evidence>
<evidence type="ECO:0000312" key="24">
    <source>
        <dbReference type="HGNC" id="HGNC:29304"/>
    </source>
</evidence>
<evidence type="ECO:0007744" key="25">
    <source>
        <dbReference type="PDB" id="7OO3"/>
    </source>
</evidence>
<evidence type="ECO:0007744" key="26">
    <source>
        <dbReference type="PDB" id="7OOP"/>
    </source>
</evidence>
<evidence type="ECO:0007744" key="27">
    <source>
        <dbReference type="PDB" id="7OPC"/>
    </source>
</evidence>
<evidence type="ECO:0007744" key="28">
    <source>
        <dbReference type="PDB" id="7OPD"/>
    </source>
</evidence>
<evidence type="ECO:0007744" key="29">
    <source>
        <dbReference type="PDB" id="8B3D"/>
    </source>
</evidence>
<evidence type="ECO:0007744" key="30">
    <source>
        <dbReference type="PDB" id="8B3G"/>
    </source>
</evidence>
<evidence type="ECO:0007744" key="31">
    <source>
    </source>
</evidence>
<evidence type="ECO:0007829" key="32">
    <source>
        <dbReference type="PDB" id="5XV8"/>
    </source>
</evidence>
<evidence type="ECO:0007829" key="33">
    <source>
        <dbReference type="PDB" id="7OO3"/>
    </source>
</evidence>
<evidence type="ECO:0007829" key="34">
    <source>
        <dbReference type="PDB" id="8B3D"/>
    </source>
</evidence>
<evidence type="ECO:0007829" key="35">
    <source>
        <dbReference type="PDB" id="9BZ0"/>
    </source>
</evidence>
<evidence type="ECO:0007829" key="36">
    <source>
        <dbReference type="PDB" id="9FD2"/>
    </source>
</evidence>
<accession>Q2YD98</accession>
<accession>A8K9E6</accession>
<accession>B2RU11</accession>
<accession>Q8WTX4</accession>
<accession>Q9P1Z8</accession>
<feature type="chain" id="PRO_0000317282" description="UV-stimulated scaffold protein A">
    <location>
        <begin position="1"/>
        <end position="709"/>
    </location>
</feature>
<feature type="zinc finger region" description="UVSSA-type" evidence="2 23">
    <location>
        <begin position="564"/>
        <end position="591"/>
    </location>
</feature>
<feature type="region of interest" description="Disordered" evidence="3">
    <location>
        <begin position="1"/>
        <end position="20"/>
    </location>
</feature>
<feature type="region of interest" description="VHS-like">
    <location>
        <begin position="2"/>
        <end position="145"/>
    </location>
</feature>
<feature type="region of interest" description="Disordered" evidence="3">
    <location>
        <begin position="230"/>
        <end position="289"/>
    </location>
</feature>
<feature type="region of interest" description="Disordered" evidence="3">
    <location>
        <begin position="386"/>
        <end position="406"/>
    </location>
</feature>
<feature type="region of interest" description="Disordered" evidence="3">
    <location>
        <begin position="469"/>
        <end position="495"/>
    </location>
</feature>
<feature type="region of interest" description="Disordered" evidence="3">
    <location>
        <begin position="588"/>
        <end position="655"/>
    </location>
</feature>
<feature type="coiled-coil region" evidence="1">
    <location>
        <begin position="165"/>
        <end position="199"/>
    </location>
</feature>
<feature type="compositionally biased region" description="Basic and acidic residues" evidence="3">
    <location>
        <begin position="1"/>
        <end position="10"/>
    </location>
</feature>
<feature type="compositionally biased region" description="Acidic residues" evidence="3">
    <location>
        <begin position="280"/>
        <end position="289"/>
    </location>
</feature>
<feature type="compositionally biased region" description="Basic and acidic residues" evidence="3">
    <location>
        <begin position="386"/>
        <end position="395"/>
    </location>
</feature>
<feature type="compositionally biased region" description="Acidic residues" evidence="3">
    <location>
        <begin position="397"/>
        <end position="406"/>
    </location>
</feature>
<feature type="compositionally biased region" description="Low complexity" evidence="3">
    <location>
        <begin position="477"/>
        <end position="486"/>
    </location>
</feature>
<feature type="compositionally biased region" description="Basic and acidic residues" evidence="3">
    <location>
        <begin position="592"/>
        <end position="632"/>
    </location>
</feature>
<feature type="compositionally biased region" description="Basic residues" evidence="3">
    <location>
        <begin position="646"/>
        <end position="655"/>
    </location>
</feature>
<feature type="binding site" evidence="2 14 29">
    <location>
        <position position="567"/>
    </location>
    <ligand>
        <name>Zn(2+)</name>
        <dbReference type="ChEBI" id="CHEBI:29105"/>
    </ligand>
</feature>
<feature type="binding site" evidence="2 14 29">
    <location>
        <position position="577"/>
    </location>
    <ligand>
        <name>Zn(2+)</name>
        <dbReference type="ChEBI" id="CHEBI:29105"/>
    </ligand>
</feature>
<feature type="binding site" evidence="2 14 29">
    <location>
        <position position="585"/>
    </location>
    <ligand>
        <name>Zn(2+)</name>
        <dbReference type="ChEBI" id="CHEBI:29105"/>
    </ligand>
</feature>
<feature type="binding site" evidence="2 14 29">
    <location>
        <position position="588"/>
    </location>
    <ligand>
        <name>Zn(2+)</name>
        <dbReference type="ChEBI" id="CHEBI:29105"/>
    </ligand>
</feature>
<feature type="modified residue" description="Phosphoserine" evidence="31">
    <location>
        <position position="281"/>
    </location>
</feature>
<feature type="modified residue" description="Phosphoserine" evidence="31">
    <location>
        <position position="287"/>
    </location>
</feature>
<feature type="cross-link" description="Glycyl lysine isopeptide (Lys-Gly) (interchain with G-Cter in ubiquitin)" evidence="22">
    <location>
        <position position="414"/>
    </location>
</feature>
<feature type="splice variant" id="VSP_030932" description="In isoform 2." evidence="18 19">
    <location>
        <begin position="1"/>
        <end position="449"/>
    </location>
</feature>
<feature type="sequence variant" id="VAR_067798" description="In UVSS3; mild phenotype; impairs transcription-coupled nucleotide excision repair ability; dbSNP:rs387907164." evidence="7">
    <original>C</original>
    <variation>R</variation>
    <location>
        <position position="32"/>
    </location>
</feature>
<feature type="sequence variant" id="VAR_090255" description="In UVSS3." evidence="7">
    <location>
        <begin position="123"/>
        <end position="709"/>
    </location>
</feature>
<feature type="sequence variant" id="VAR_090256" description="In UVSS3." evidence="13">
    <location>
        <begin position="347"/>
        <end position="709"/>
    </location>
</feature>
<feature type="sequence variant" id="VAR_038499" description="In dbSNP:rs2276904.">
    <original>R</original>
    <variation>H</variation>
    <location>
        <position position="391"/>
    </location>
</feature>
<feature type="sequence variant" id="VAR_038500" description="In dbSNP:rs28522910." evidence="4 5 6">
    <original>P</original>
    <variation>L</variation>
    <location>
        <position position="620"/>
    </location>
</feature>
<feature type="mutagenesis site" description="Impairs transcription-coupled nucleotide excision repair ability." evidence="7">
    <original>W</original>
    <variation>A</variation>
    <location>
        <position position="120"/>
    </location>
</feature>
<feature type="mutagenesis site" description="Impairs transcription-coupled nucleotide excision repair ability." evidence="7">
    <original>RKR</original>
    <variation>EEE</variation>
    <location>
        <begin position="157"/>
        <end position="159"/>
    </location>
</feature>
<feature type="mutagenesis site" description="Impairs interaction with the TFIIH complex." evidence="10">
    <original>F</original>
    <variation>A</variation>
    <location>
        <position position="408"/>
    </location>
</feature>
<feature type="mutagenesis site" description="Impairs interaction with the TFIIH complex." evidence="10">
    <original>V</original>
    <variation>A</variation>
    <location>
        <position position="411"/>
    </location>
</feature>
<feature type="mutagenesis site" description="Defects in transcription-coupled nucleotide excision repair (TC-NER); when associated withA-577, A-585 and A-588." evidence="14">
    <original>C</original>
    <variation>A</variation>
    <location>
        <position position="567"/>
    </location>
</feature>
<feature type="mutagenesis site" description="Defects in transcription-coupled nucleotide excision repair (TC-NER); when associated with A-567, A-585 and A-588." evidence="14">
    <original>C</original>
    <variation>A</variation>
    <location>
        <position position="577"/>
    </location>
</feature>
<feature type="mutagenesis site" description="Defects in transcription-coupled nucleotide excision repair (TC-NER); when associated with A-567, A-577 and A-588." evidence="14">
    <original>C</original>
    <variation>A</variation>
    <location>
        <position position="585"/>
    </location>
</feature>
<feature type="mutagenesis site" description="Defects in transcription-coupled nucleotide excision repair (TC-NER); when associated with A-567, A-577 and A-585." evidence="14">
    <original>H</original>
    <variation>A</variation>
    <location>
        <position position="588"/>
    </location>
</feature>
<feature type="mutagenesis site" description="Does not affect transcription-coupled nucleotide excision repair (TC-NER)." evidence="14">
    <original>KAAVR</original>
    <variation>AAAVA</variation>
    <location>
        <begin position="679"/>
        <end position="683"/>
    </location>
</feature>
<feature type="helix" evidence="35">
    <location>
        <begin position="2"/>
        <end position="13"/>
    </location>
</feature>
<feature type="strand" evidence="36">
    <location>
        <begin position="17"/>
        <end position="19"/>
    </location>
</feature>
<feature type="helix" evidence="35">
    <location>
        <begin position="22"/>
        <end position="34"/>
    </location>
</feature>
<feature type="helix" evidence="35">
    <location>
        <begin position="36"/>
        <end position="49"/>
    </location>
</feature>
<feature type="helix" evidence="35">
    <location>
        <begin position="55"/>
        <end position="69"/>
    </location>
</feature>
<feature type="helix" evidence="35">
    <location>
        <begin position="73"/>
        <end position="80"/>
    </location>
</feature>
<feature type="helix" evidence="35">
    <location>
        <begin position="83"/>
        <end position="91"/>
    </location>
</feature>
<feature type="strand" evidence="33">
    <location>
        <begin position="99"/>
        <end position="101"/>
    </location>
</feature>
<feature type="helix" evidence="35">
    <location>
        <begin position="103"/>
        <end position="124"/>
    </location>
</feature>
<feature type="turn" evidence="35">
    <location>
        <begin position="125"/>
        <end position="127"/>
    </location>
</feature>
<feature type="helix" evidence="35">
    <location>
        <begin position="129"/>
        <end position="140"/>
    </location>
</feature>
<feature type="turn" evidence="32">
    <location>
        <begin position="392"/>
        <end position="395"/>
    </location>
</feature>
<feature type="strand" evidence="32">
    <location>
        <begin position="409"/>
        <end position="411"/>
    </location>
</feature>
<feature type="strand" evidence="35">
    <location>
        <begin position="574"/>
        <end position="576"/>
    </location>
</feature>
<feature type="strand" evidence="35">
    <location>
        <begin position="582"/>
        <end position="585"/>
    </location>
</feature>
<feature type="turn" evidence="35">
    <location>
        <begin position="586"/>
        <end position="588"/>
    </location>
</feature>
<feature type="strand" evidence="34">
    <location>
        <begin position="600"/>
        <end position="602"/>
    </location>
</feature>
<feature type="helix" evidence="35">
    <location>
        <begin position="605"/>
        <end position="617"/>
    </location>
</feature>
<feature type="helix" evidence="35">
    <location>
        <begin position="661"/>
        <end position="664"/>
    </location>
</feature>
<feature type="helix" evidence="35">
    <location>
        <begin position="668"/>
        <end position="676"/>
    </location>
</feature>
<feature type="helix" evidence="35">
    <location>
        <begin position="679"/>
        <end position="690"/>
    </location>
</feature>
<sequence>MDQKLSKLVEELTTSGEPRLNPEKMKELKKICKSSEEQLSRAYRLLIAQLTQEHAEIRLSAFQIVEELFVRSHQFRMLVVSNFQEFLELTLGTDPAQPLPPPREAAQRLRQATTRAVEGWNEKFGEAYKKLALGYHFLRHNKKVDFQDTNARSLAERKREEEKQKHLDKIYQERASQAEREMQEMSGEIESCLTEVESCFRLLVPFDFDPNPETESLGMASGMSDALRSSCAGQVGPCRSGTPDPRDGEQPCCSRDLPASAGHPRAGGGAQPSQTATGDPSDEDEDSDLEEFVRSHGLGSHKYTLDVELCSEGLKVQENEDNLALIHAARDTLKLIRNKFLPAVCSWIQRFTRVGTHGGCLKRAIDLKAELELVLRKYKELDIEPEGGERRRTEALGDAEEDEDDEDFVEVPEKEGYEPHIPDHLRPEYGLEAAPEKDTVVRCLRTRTRMDEEVSDPTSAAAQLRQLRDHLPPPSSASPSRALPEPQEAQKLAAERARAPVVPYGVDLHYWGQELPTAGKIVKSDSQHRFWKPSEVEEEVVNADISEMLRSRHITFAGKFEPVQHWCRAPRPDGRLCERQDRLKCPFHGKIVPRDDEGRPLDPEDRAREQRRQLQKQERPEWQDPELMRDVEAATGQDLGSSRYSGKGRGKKRRYPSLTNLKAQADTARARIGRKVFAKAAVRRVVAAMNRMDQKKHEKFSNQFNYALN</sequence>
<reference key="1">
    <citation type="journal article" date="2000" name="DNA Res.">
        <title>Prediction of the coding sequences of unidentified human genes. XVII. The complete sequences of 100 new cDNA clones from brain which code for large proteins in vitro.</title>
        <authorList>
            <person name="Nagase T."/>
            <person name="Kikuno R."/>
            <person name="Ishikawa K."/>
            <person name="Hirosawa M."/>
            <person name="Ohara O."/>
        </authorList>
    </citation>
    <scope>NUCLEOTIDE SEQUENCE [LARGE SCALE MRNA] (ISOFORM 1)</scope>
    <scope>VARIANT LEU-620</scope>
    <source>
        <tissue>Brain</tissue>
    </source>
</reference>
<reference key="2">
    <citation type="journal article" date="2004" name="Nat. Genet.">
        <title>Complete sequencing and characterization of 21,243 full-length human cDNAs.</title>
        <authorList>
            <person name="Ota T."/>
            <person name="Suzuki Y."/>
            <person name="Nishikawa T."/>
            <person name="Otsuki T."/>
            <person name="Sugiyama T."/>
            <person name="Irie R."/>
            <person name="Wakamatsu A."/>
            <person name="Hayashi K."/>
            <person name="Sato H."/>
            <person name="Nagai K."/>
            <person name="Kimura K."/>
            <person name="Makita H."/>
            <person name="Sekine M."/>
            <person name="Obayashi M."/>
            <person name="Nishi T."/>
            <person name="Shibahara T."/>
            <person name="Tanaka T."/>
            <person name="Ishii S."/>
            <person name="Yamamoto J."/>
            <person name="Saito K."/>
            <person name="Kawai Y."/>
            <person name="Isono Y."/>
            <person name="Nakamura Y."/>
            <person name="Nagahari K."/>
            <person name="Murakami K."/>
            <person name="Yasuda T."/>
            <person name="Iwayanagi T."/>
            <person name="Wagatsuma M."/>
            <person name="Shiratori A."/>
            <person name="Sudo H."/>
            <person name="Hosoiri T."/>
            <person name="Kaku Y."/>
            <person name="Kodaira H."/>
            <person name="Kondo H."/>
            <person name="Sugawara M."/>
            <person name="Takahashi M."/>
            <person name="Kanda K."/>
            <person name="Yokoi T."/>
            <person name="Furuya T."/>
            <person name="Kikkawa E."/>
            <person name="Omura Y."/>
            <person name="Abe K."/>
            <person name="Kamihara K."/>
            <person name="Katsuta N."/>
            <person name="Sato K."/>
            <person name="Tanikawa M."/>
            <person name="Yamazaki M."/>
            <person name="Ninomiya K."/>
            <person name="Ishibashi T."/>
            <person name="Yamashita H."/>
            <person name="Murakawa K."/>
            <person name="Fujimori K."/>
            <person name="Tanai H."/>
            <person name="Kimata M."/>
            <person name="Watanabe M."/>
            <person name="Hiraoka S."/>
            <person name="Chiba Y."/>
            <person name="Ishida S."/>
            <person name="Ono Y."/>
            <person name="Takiguchi S."/>
            <person name="Watanabe S."/>
            <person name="Yosida M."/>
            <person name="Hotuta T."/>
            <person name="Kusano J."/>
            <person name="Kanehori K."/>
            <person name="Takahashi-Fujii A."/>
            <person name="Hara H."/>
            <person name="Tanase T.-O."/>
            <person name="Nomura Y."/>
            <person name="Togiya S."/>
            <person name="Komai F."/>
            <person name="Hara R."/>
            <person name="Takeuchi K."/>
            <person name="Arita M."/>
            <person name="Imose N."/>
            <person name="Musashino K."/>
            <person name="Yuuki H."/>
            <person name="Oshima A."/>
            <person name="Sasaki N."/>
            <person name="Aotsuka S."/>
            <person name="Yoshikawa Y."/>
            <person name="Matsunawa H."/>
            <person name="Ichihara T."/>
            <person name="Shiohata N."/>
            <person name="Sano S."/>
            <person name="Moriya S."/>
            <person name="Momiyama H."/>
            <person name="Satoh N."/>
            <person name="Takami S."/>
            <person name="Terashima Y."/>
            <person name="Suzuki O."/>
            <person name="Nakagawa S."/>
            <person name="Senoh A."/>
            <person name="Mizoguchi H."/>
            <person name="Goto Y."/>
            <person name="Shimizu F."/>
            <person name="Wakebe H."/>
            <person name="Hishigaki H."/>
            <person name="Watanabe T."/>
            <person name="Sugiyama A."/>
            <person name="Takemoto M."/>
            <person name="Kawakami B."/>
            <person name="Yamazaki M."/>
            <person name="Watanabe K."/>
            <person name="Kumagai A."/>
            <person name="Itakura S."/>
            <person name="Fukuzumi Y."/>
            <person name="Fujimori Y."/>
            <person name="Komiyama M."/>
            <person name="Tashiro H."/>
            <person name="Tanigami A."/>
            <person name="Fujiwara T."/>
            <person name="Ono T."/>
            <person name="Yamada K."/>
            <person name="Fujii Y."/>
            <person name="Ozaki K."/>
            <person name="Hirao M."/>
            <person name="Ohmori Y."/>
            <person name="Kawabata A."/>
            <person name="Hikiji T."/>
            <person name="Kobatake N."/>
            <person name="Inagaki H."/>
            <person name="Ikema Y."/>
            <person name="Okamoto S."/>
            <person name="Okitani R."/>
            <person name="Kawakami T."/>
            <person name="Noguchi S."/>
            <person name="Itoh T."/>
            <person name="Shigeta K."/>
            <person name="Senba T."/>
            <person name="Matsumura K."/>
            <person name="Nakajima Y."/>
            <person name="Mizuno T."/>
            <person name="Morinaga M."/>
            <person name="Sasaki M."/>
            <person name="Togashi T."/>
            <person name="Oyama M."/>
            <person name="Hata H."/>
            <person name="Watanabe M."/>
            <person name="Komatsu T."/>
            <person name="Mizushima-Sugano J."/>
            <person name="Satoh T."/>
            <person name="Shirai Y."/>
            <person name="Takahashi Y."/>
            <person name="Nakagawa K."/>
            <person name="Okumura K."/>
            <person name="Nagase T."/>
            <person name="Nomura N."/>
            <person name="Kikuchi H."/>
            <person name="Masuho Y."/>
            <person name="Yamashita R."/>
            <person name="Nakai K."/>
            <person name="Yada T."/>
            <person name="Nakamura Y."/>
            <person name="Ohara O."/>
            <person name="Isogai T."/>
            <person name="Sugano S."/>
        </authorList>
    </citation>
    <scope>NUCLEOTIDE SEQUENCE [LARGE SCALE MRNA] (ISOFORM 2)</scope>
    <scope>VARIANT LEU-620</scope>
    <source>
        <tissue>Thymus</tissue>
    </source>
</reference>
<reference key="3">
    <citation type="journal article" date="2005" name="Nature">
        <title>Generation and annotation of the DNA sequences of human chromosomes 2 and 4.</title>
        <authorList>
            <person name="Hillier L.W."/>
            <person name="Graves T.A."/>
            <person name="Fulton R.S."/>
            <person name="Fulton L.A."/>
            <person name="Pepin K.H."/>
            <person name="Minx P."/>
            <person name="Wagner-McPherson C."/>
            <person name="Layman D."/>
            <person name="Wylie K."/>
            <person name="Sekhon M."/>
            <person name="Becker M.C."/>
            <person name="Fewell G.A."/>
            <person name="Delehaunty K.D."/>
            <person name="Miner T.L."/>
            <person name="Nash W.E."/>
            <person name="Kremitzki C."/>
            <person name="Oddy L."/>
            <person name="Du H."/>
            <person name="Sun H."/>
            <person name="Bradshaw-Cordum H."/>
            <person name="Ali J."/>
            <person name="Carter J."/>
            <person name="Cordes M."/>
            <person name="Harris A."/>
            <person name="Isak A."/>
            <person name="van Brunt A."/>
            <person name="Nguyen C."/>
            <person name="Du F."/>
            <person name="Courtney L."/>
            <person name="Kalicki J."/>
            <person name="Ozersky P."/>
            <person name="Abbott S."/>
            <person name="Armstrong J."/>
            <person name="Belter E.A."/>
            <person name="Caruso L."/>
            <person name="Cedroni M."/>
            <person name="Cotton M."/>
            <person name="Davidson T."/>
            <person name="Desai A."/>
            <person name="Elliott G."/>
            <person name="Erb T."/>
            <person name="Fronick C."/>
            <person name="Gaige T."/>
            <person name="Haakenson W."/>
            <person name="Haglund K."/>
            <person name="Holmes A."/>
            <person name="Harkins R."/>
            <person name="Kim K."/>
            <person name="Kruchowski S.S."/>
            <person name="Strong C.M."/>
            <person name="Grewal N."/>
            <person name="Goyea E."/>
            <person name="Hou S."/>
            <person name="Levy A."/>
            <person name="Martinka S."/>
            <person name="Mead K."/>
            <person name="McLellan M.D."/>
            <person name="Meyer R."/>
            <person name="Randall-Maher J."/>
            <person name="Tomlinson C."/>
            <person name="Dauphin-Kohlberg S."/>
            <person name="Kozlowicz-Reilly A."/>
            <person name="Shah N."/>
            <person name="Swearengen-Shahid S."/>
            <person name="Snider J."/>
            <person name="Strong J.T."/>
            <person name="Thompson J."/>
            <person name="Yoakum M."/>
            <person name="Leonard S."/>
            <person name="Pearman C."/>
            <person name="Trani L."/>
            <person name="Radionenko M."/>
            <person name="Waligorski J.E."/>
            <person name="Wang C."/>
            <person name="Rock S.M."/>
            <person name="Tin-Wollam A.-M."/>
            <person name="Maupin R."/>
            <person name="Latreille P."/>
            <person name="Wendl M.C."/>
            <person name="Yang S.-P."/>
            <person name="Pohl C."/>
            <person name="Wallis J.W."/>
            <person name="Spieth J."/>
            <person name="Bieri T.A."/>
            <person name="Berkowicz N."/>
            <person name="Nelson J.O."/>
            <person name="Osborne J."/>
            <person name="Ding L."/>
            <person name="Meyer R."/>
            <person name="Sabo A."/>
            <person name="Shotland Y."/>
            <person name="Sinha P."/>
            <person name="Wohldmann P.E."/>
            <person name="Cook L.L."/>
            <person name="Hickenbotham M.T."/>
            <person name="Eldred J."/>
            <person name="Williams D."/>
            <person name="Jones T.A."/>
            <person name="She X."/>
            <person name="Ciccarelli F.D."/>
            <person name="Izaurralde E."/>
            <person name="Taylor J."/>
            <person name="Schmutz J."/>
            <person name="Myers R.M."/>
            <person name="Cox D.R."/>
            <person name="Huang X."/>
            <person name="McPherson J.D."/>
            <person name="Mardis E.R."/>
            <person name="Clifton S.W."/>
            <person name="Warren W.C."/>
            <person name="Chinwalla A.T."/>
            <person name="Eddy S.R."/>
            <person name="Marra M.A."/>
            <person name="Ovcharenko I."/>
            <person name="Furey T.S."/>
            <person name="Miller W."/>
            <person name="Eichler E.E."/>
            <person name="Bork P."/>
            <person name="Suyama M."/>
            <person name="Torrents D."/>
            <person name="Waterston R.H."/>
            <person name="Wilson R.K."/>
        </authorList>
    </citation>
    <scope>NUCLEOTIDE SEQUENCE [LARGE SCALE GENOMIC DNA]</scope>
</reference>
<reference key="4">
    <citation type="journal article" date="2004" name="Genome Res.">
        <title>The status, quality, and expansion of the NIH full-length cDNA project: the Mammalian Gene Collection (MGC).</title>
        <authorList>
            <consortium name="The MGC Project Team"/>
        </authorList>
    </citation>
    <scope>NUCLEOTIDE SEQUENCE [LARGE SCALE MRNA] (ISOFORMS 1 AND 2)</scope>
    <scope>VARIANT LEU-620</scope>
    <source>
        <tissue>Duodenum</tissue>
        <tissue>Lung</tissue>
        <tissue>Skin</tissue>
    </source>
</reference>
<reference key="5">
    <citation type="journal article" date="2008" name="Proc. Natl. Acad. Sci. U.S.A.">
        <title>A quantitative atlas of mitotic phosphorylation.</title>
        <authorList>
            <person name="Dephoure N."/>
            <person name="Zhou C."/>
            <person name="Villen J."/>
            <person name="Beausoleil S.A."/>
            <person name="Bakalarski C.E."/>
            <person name="Elledge S.J."/>
            <person name="Gygi S.P."/>
        </authorList>
    </citation>
    <scope>IDENTIFICATION BY MASS SPECTROMETRY [LARGE SCALE ANALYSIS]</scope>
    <source>
        <tissue>Cervix carcinoma</tissue>
    </source>
</reference>
<reference key="6">
    <citation type="journal article" date="2009" name="Sci. Signal.">
        <title>Quantitative phosphoproteomic analysis of T cell receptor signaling reveals system-wide modulation of protein-protein interactions.</title>
        <authorList>
            <person name="Mayya V."/>
            <person name="Lundgren D.H."/>
            <person name="Hwang S.-I."/>
            <person name="Rezaul K."/>
            <person name="Wu L."/>
            <person name="Eng J.K."/>
            <person name="Rodionov V."/>
            <person name="Han D.K."/>
        </authorList>
    </citation>
    <scope>PHOSPHORYLATION [LARGE SCALE ANALYSIS] AT SER-281 AND SER-287</scope>
    <scope>IDENTIFICATION BY MASS SPECTROMETRY [LARGE SCALE ANALYSIS]</scope>
    <source>
        <tissue>Leukemic T-cell</tissue>
    </source>
</reference>
<reference key="7">
    <citation type="journal article" date="2012" name="Nat. Genet.">
        <title>Mutations in UVSSA cause UV-sensitive syndrome and impair RNA polymerase IIo processing in transcription-coupled nucleotide-excision repair.</title>
        <authorList>
            <person name="Nakazawa Y."/>
            <person name="Sasaki K."/>
            <person name="Mitsutake N."/>
            <person name="Matsuse M."/>
            <person name="Shimada M."/>
            <person name="Nardo T."/>
            <person name="Takahashi Y."/>
            <person name="Ohyama K."/>
            <person name="Ito K."/>
            <person name="Mishima H."/>
            <person name="Nomura M."/>
            <person name="Kinoshita A."/>
            <person name="Ono S."/>
            <person name="Takenaka K."/>
            <person name="Masuyama R."/>
            <person name="Kudo T."/>
            <person name="Slor H."/>
            <person name="Utani A."/>
            <person name="Tateishi S."/>
            <person name="Yamashita S."/>
            <person name="Stefanini M."/>
            <person name="Lehmann A.R."/>
            <person name="Yoshiura K.I."/>
            <person name="Ogi T."/>
        </authorList>
    </citation>
    <scope>FUNCTION</scope>
    <scope>INVOLVEMENT IN UVSS3</scope>
    <scope>MUTAGENESIS OF TRP-120 AND 157-ARG--ARG-159</scope>
    <scope>VARIANTS UVSS3 ARG-32 AND 123-LYS--ASN-709 DEL</scope>
    <scope>CHARACTERIZATION OF VARIANT UVSS3 ARG-32</scope>
</reference>
<reference key="8">
    <citation type="journal article" date="2012" name="Nat. Genet.">
        <title>UV-sensitive syndrome protein UVSSA recruits USP7 to regulate transcription-coupled repair.</title>
        <authorList>
            <person name="Schwertman P."/>
            <person name="Lagarou A."/>
            <person name="Dekkers D.H."/>
            <person name="Raams A."/>
            <person name="van der Hoek A.C."/>
            <person name="Laffeber C."/>
            <person name="Hoeijmakers J.H."/>
            <person name="Demmers J.A."/>
            <person name="Fousteri M."/>
            <person name="Vermeulen W."/>
            <person name="Marteijn J.A."/>
        </authorList>
    </citation>
    <scope>FUNCTION</scope>
    <scope>INVOLVEMENT IN UVSS3</scope>
    <scope>SUBCELLULAR LOCATION</scope>
    <scope>UBIQUITINATION</scope>
    <scope>INTERACTION WITH USP7 AND RNA POLYMERASE II</scope>
</reference>
<reference key="9">
    <citation type="journal article" date="2012" name="Nat. Genet.">
        <title>Mutations in UVSSA cause UV-sensitive syndrome and destabilize ERCC6 in transcription-coupled DNA repair.</title>
        <authorList>
            <person name="Zhang X."/>
            <person name="Horibata K."/>
            <person name="Saijo M."/>
            <person name="Ishigami C."/>
            <person name="Ukai A."/>
            <person name="Kanno S.I."/>
            <person name="Tahara H."/>
            <person name="Neilan E.G."/>
            <person name="Honma M."/>
            <person name="Nohmi T."/>
            <person name="Yasui A."/>
            <person name="Tanaka K."/>
        </authorList>
    </citation>
    <scope>FUNCTION</scope>
    <scope>INVOLVEMENT IN UVSS3</scope>
    <scope>SUBCELLULAR LOCATION</scope>
    <scope>INTERACTION WITH ERCC6; ERCC8 AND USP7</scope>
</reference>
<reference key="10">
    <citation type="journal article" date="2013" name="J. Proteome Res.">
        <title>Toward a comprehensive characterization of a human cancer cell phosphoproteome.</title>
        <authorList>
            <person name="Zhou H."/>
            <person name="Di Palma S."/>
            <person name="Preisinger C."/>
            <person name="Peng M."/>
            <person name="Polat A.N."/>
            <person name="Heck A.J."/>
            <person name="Mohammed S."/>
        </authorList>
    </citation>
    <scope>IDENTIFICATION BY MASS SPECTROMETRY [LARGE SCALE ANALYSIS]</scope>
    <source>
        <tissue>Erythroleukemia</tissue>
    </source>
</reference>
<reference key="11">
    <citation type="journal article" date="2014" name="J. Proteomics">
        <title>An enzyme assisted RP-RPLC approach for in-depth analysis of human liver phosphoproteome.</title>
        <authorList>
            <person name="Bian Y."/>
            <person name="Song C."/>
            <person name="Cheng K."/>
            <person name="Dong M."/>
            <person name="Wang F."/>
            <person name="Huang J."/>
            <person name="Sun D."/>
            <person name="Wang L."/>
            <person name="Ye M."/>
            <person name="Zou H."/>
        </authorList>
    </citation>
    <scope>IDENTIFICATION BY MASS SPECTROMETRY [LARGE SCALE ANALYSIS]</scope>
    <source>
        <tissue>Liver</tissue>
    </source>
</reference>
<reference key="12">
    <citation type="journal article" date="2020" name="Cell">
        <title>Ubiquitination of DNA Damage-Stalled RNAPII Promotes Transcription-Coupled Repair.</title>
        <authorList>
            <person name="Nakazawa Y."/>
            <person name="Hara Y."/>
            <person name="Oka Y."/>
            <person name="Komine O."/>
            <person name="van den Heuvel D."/>
            <person name="Guo C."/>
            <person name="Daigaku Y."/>
            <person name="Isono M."/>
            <person name="He Y."/>
            <person name="Shimada M."/>
            <person name="Kato K."/>
            <person name="Jia N."/>
            <person name="Hashimoto S."/>
            <person name="Kotani Y."/>
            <person name="Miyoshi Y."/>
            <person name="Tanaka M."/>
            <person name="Sobue A."/>
            <person name="Mitsutake N."/>
            <person name="Suganami T."/>
            <person name="Masuda A."/>
            <person name="Ohno K."/>
            <person name="Nakada S."/>
            <person name="Mashimo T."/>
            <person name="Yamanaka K."/>
            <person name="Luijsterburg M.S."/>
            <person name="Ogi T."/>
        </authorList>
    </citation>
    <scope>FUNCTION</scope>
    <scope>INTERACTION WITH RNA POLYMERASE II AND THE TFIIH COMPLEX</scope>
    <scope>UBIQUITINATION AT LYS-414</scope>
    <scope>MUTAGENESIS OF PHE-408 AND VAL-411</scope>
</reference>
<reference key="13">
    <citation type="journal article" date="2020" name="Nat. Commun.">
        <title>The cooperative action of CSB, CSA, and UVSSA target TFIIH to DNA damage-stalled RNA polymerase II.</title>
        <authorList>
            <person name="van der Weegen Y."/>
            <person name="Golan-Berman H."/>
            <person name="Mevissen T.E.T."/>
            <person name="Apelt K."/>
            <person name="Gonzalez-Prieto R."/>
            <person name="Goedhart J."/>
            <person name="Heilbrun E.E."/>
            <person name="Vertegaal A.C.O."/>
            <person name="van den Heuvel D."/>
            <person name="Walter J.C."/>
            <person name="Adar S."/>
            <person name="Luijsterburg M.S."/>
        </authorList>
    </citation>
    <scope>FUNCTION</scope>
</reference>
<reference key="14">
    <citation type="journal article" date="2024" name="Nat. Cell Biol.">
        <title>Transcription-coupled DNA-protein crosslink repair by CSB and CRL4CSA-mediated degradation.</title>
        <authorList>
            <person name="van Sluis M."/>
            <person name="Yu Q."/>
            <person name="van der Woude M."/>
            <person name="Gonzalo-Hansen C."/>
            <person name="Dealy S.C."/>
            <person name="Janssens R.C."/>
            <person name="Somsen H.B."/>
            <person name="Ramadhin A.R."/>
            <person name="Dekkers D.H.W."/>
            <person name="Wienecke H.L."/>
            <person name="Demmers J.J.P.G."/>
            <person name="Raams A."/>
            <person name="Davo-Martinez C."/>
            <person name="Llerena Schiffmacher D.A."/>
            <person name="van Toorn M."/>
            <person name="Haeckes D."/>
            <person name="Thijssen K.L."/>
            <person name="Zhou D."/>
            <person name="Lammers J.G."/>
            <person name="Pines A."/>
            <person name="Vermeulen W."/>
            <person name="Pothof J."/>
            <person name="Demmers J.A.A."/>
            <person name="van den Berg D.L.C."/>
            <person name="Lans H."/>
            <person name="Marteijn J.A."/>
        </authorList>
    </citation>
    <scope>FUNCTION</scope>
</reference>
<reference key="15">
    <citation type="journal article" date="2024" name="Nat. Cell Biol.">
        <title>Transcription-coupled repair of DNA-protein cross-links depends on CSA and CSB.</title>
        <authorList>
            <person name="Carnie C.J."/>
            <person name="Acampora A.C."/>
            <person name="Bader A.S."/>
            <person name="Erdenebat C."/>
            <person name="Zhao S."/>
            <person name="Bitensky E."/>
            <person name="van den Heuvel D."/>
            <person name="Parnas A."/>
            <person name="Gupta V."/>
            <person name="D'Alessandro G."/>
            <person name="Sczaniecka-Clift M."/>
            <person name="Weickert P."/>
            <person name="Aygenli F."/>
            <person name="Goetz M.J."/>
            <person name="Cordes J."/>
            <person name="Esain-Garcia I."/>
            <person name="Melidis L."/>
            <person name="Wondergem A.P."/>
            <person name="Lam S."/>
            <person name="Robles M.S."/>
            <person name="Balasubramanian S."/>
            <person name="Adar S."/>
            <person name="Luijsterburg M.S."/>
            <person name="Jackson S.P."/>
            <person name="Stingele J."/>
        </authorList>
    </citation>
    <scope>FUNCTION</scope>
</reference>
<reference evidence="25 26 27 28" key="16">
    <citation type="journal article" date="2021" name="Nature">
        <title>Structural basis of human transcription-DNA repair coupling.</title>
        <authorList>
            <person name="Kokic G."/>
            <person name="Wagner F.R."/>
            <person name="Chernev A."/>
            <person name="Urlaub H."/>
            <person name="Cramer P."/>
        </authorList>
    </citation>
    <scope>STRUCTURE BY ELECTRON MICROSCOPY (2.70 ANGSTROMS) IN COMPLEX WITH ERCC6; ERCC8; DDB1 AND RNA POLYMERASE II</scope>
    <scope>FUNCTION</scope>
</reference>
<reference evidence="29 30" key="17">
    <citation type="journal article" date="2024" name="Nat. Struct. Mol. Biol.">
        <title>Structural basis for RNA polymerase II ubiquitylation and inactivation in transcription-coupled repair.</title>
        <authorList>
            <person name="Kokic G."/>
            <person name="Yakoub G."/>
            <person name="van den Heuvel D."/>
            <person name="Wondergem A.P."/>
            <person name="van der Meer P.J."/>
            <person name="van der Weegen Y."/>
            <person name="Chernev A."/>
            <person name="Fianu I."/>
            <person name="Fokkens T.J."/>
            <person name="Lorenz S."/>
            <person name="Urlaub H."/>
            <person name="Cramer P."/>
            <person name="Luijsterburg M.S."/>
        </authorList>
    </citation>
    <scope>STRUCTURE BY ELECTRON MICROSCOPY (2.60 ANGSTROMS) IN COMPLEX WITH ZINC; ELOF1; ERCC8; DDB1; ERCC6; CUL4A; RBX1; DDB1 AND RNA POLYMERASE II</scope>
    <scope>FUNCTION</scope>
    <scope>ZINC-BINDING</scope>
    <scope>MUTAGENESIS OF CYS-567; CYS-577; CYS-585; HIS-588 AND 679-LYS--ARG-683</scope>
</reference>
<reference key="18">
    <citation type="journal article" date="2023" name="Adv. Biomed. Res.">
        <title>A Homozygous Nonsense Variant in UVSSA Causes UV-sensitive Syndrome from Very Large Kindred: The First Report from Iran.</title>
        <authorList>
            <person name="Ahmadi Shadmehri A."/>
            <person name="Akbarian F."/>
            <person name="Rahimi A."/>
            <person name="Pourreza M.R."/>
            <person name="Tabatabaiefar M.A."/>
        </authorList>
    </citation>
    <scope>VARIANT UVSS3 347-TRP--ASN-709 DEL</scope>
</reference>
<keyword id="KW-0002">3D-structure</keyword>
<keyword id="KW-0025">Alternative splicing</keyword>
<keyword id="KW-0158">Chromosome</keyword>
<keyword id="KW-0175">Coiled coil</keyword>
<keyword id="KW-0225">Disease variant</keyword>
<keyword id="KW-0227">DNA damage</keyword>
<keyword id="KW-0234">DNA repair</keyword>
<keyword id="KW-1017">Isopeptide bond</keyword>
<keyword id="KW-0479">Metal-binding</keyword>
<keyword id="KW-0597">Phosphoprotein</keyword>
<keyword id="KW-1267">Proteomics identification</keyword>
<keyword id="KW-1185">Reference proteome</keyword>
<keyword id="KW-0832">Ubl conjugation</keyword>
<keyword id="KW-0862">Zinc</keyword>
<keyword id="KW-0863">Zinc-finger</keyword>
<proteinExistence type="evidence at protein level"/>